<name>GATA_GEODF</name>
<gene>
    <name evidence="1" type="primary">gatA</name>
    <name type="ordered locus">Geob_0381</name>
</gene>
<evidence type="ECO:0000255" key="1">
    <source>
        <dbReference type="HAMAP-Rule" id="MF_00120"/>
    </source>
</evidence>
<comment type="function">
    <text evidence="1">Allows the formation of correctly charged Gln-tRNA(Gln) through the transamidation of misacylated Glu-tRNA(Gln) in organisms which lack glutaminyl-tRNA synthetase. The reaction takes place in the presence of glutamine and ATP through an activated gamma-phospho-Glu-tRNA(Gln).</text>
</comment>
<comment type="catalytic activity">
    <reaction evidence="1">
        <text>L-glutamyl-tRNA(Gln) + L-glutamine + ATP + H2O = L-glutaminyl-tRNA(Gln) + L-glutamate + ADP + phosphate + H(+)</text>
        <dbReference type="Rhea" id="RHEA:17521"/>
        <dbReference type="Rhea" id="RHEA-COMP:9681"/>
        <dbReference type="Rhea" id="RHEA-COMP:9684"/>
        <dbReference type="ChEBI" id="CHEBI:15377"/>
        <dbReference type="ChEBI" id="CHEBI:15378"/>
        <dbReference type="ChEBI" id="CHEBI:29985"/>
        <dbReference type="ChEBI" id="CHEBI:30616"/>
        <dbReference type="ChEBI" id="CHEBI:43474"/>
        <dbReference type="ChEBI" id="CHEBI:58359"/>
        <dbReference type="ChEBI" id="CHEBI:78520"/>
        <dbReference type="ChEBI" id="CHEBI:78521"/>
        <dbReference type="ChEBI" id="CHEBI:456216"/>
        <dbReference type="EC" id="6.3.5.7"/>
    </reaction>
</comment>
<comment type="subunit">
    <text evidence="1">Heterotrimer of A, B and C subunits.</text>
</comment>
<comment type="similarity">
    <text evidence="1">Belongs to the amidase family. GatA subfamily.</text>
</comment>
<dbReference type="EC" id="6.3.5.7" evidence="1"/>
<dbReference type="EMBL" id="CP001390">
    <property type="protein sequence ID" value="ACM18750.1"/>
    <property type="molecule type" value="Genomic_DNA"/>
</dbReference>
<dbReference type="RefSeq" id="WP_012645479.1">
    <property type="nucleotide sequence ID" value="NC_011979.1"/>
</dbReference>
<dbReference type="SMR" id="B9LZ18"/>
<dbReference type="STRING" id="316067.Geob_0381"/>
<dbReference type="KEGG" id="geo:Geob_0381"/>
<dbReference type="eggNOG" id="COG0154">
    <property type="taxonomic scope" value="Bacteria"/>
</dbReference>
<dbReference type="HOGENOM" id="CLU_009600_0_3_7"/>
<dbReference type="OrthoDB" id="9811471at2"/>
<dbReference type="Proteomes" id="UP000007721">
    <property type="component" value="Chromosome"/>
</dbReference>
<dbReference type="GO" id="GO:0030956">
    <property type="term" value="C:glutamyl-tRNA(Gln) amidotransferase complex"/>
    <property type="evidence" value="ECO:0007669"/>
    <property type="project" value="InterPro"/>
</dbReference>
<dbReference type="GO" id="GO:0005524">
    <property type="term" value="F:ATP binding"/>
    <property type="evidence" value="ECO:0007669"/>
    <property type="project" value="UniProtKB-KW"/>
</dbReference>
<dbReference type="GO" id="GO:0050567">
    <property type="term" value="F:glutaminyl-tRNA synthase (glutamine-hydrolyzing) activity"/>
    <property type="evidence" value="ECO:0007669"/>
    <property type="project" value="UniProtKB-UniRule"/>
</dbReference>
<dbReference type="GO" id="GO:0006412">
    <property type="term" value="P:translation"/>
    <property type="evidence" value="ECO:0007669"/>
    <property type="project" value="UniProtKB-UniRule"/>
</dbReference>
<dbReference type="Gene3D" id="3.90.1300.10">
    <property type="entry name" value="Amidase signature (AS) domain"/>
    <property type="match status" value="1"/>
</dbReference>
<dbReference type="HAMAP" id="MF_00120">
    <property type="entry name" value="GatA"/>
    <property type="match status" value="1"/>
</dbReference>
<dbReference type="InterPro" id="IPR000120">
    <property type="entry name" value="Amidase"/>
</dbReference>
<dbReference type="InterPro" id="IPR020556">
    <property type="entry name" value="Amidase_CS"/>
</dbReference>
<dbReference type="InterPro" id="IPR023631">
    <property type="entry name" value="Amidase_dom"/>
</dbReference>
<dbReference type="InterPro" id="IPR036928">
    <property type="entry name" value="AS_sf"/>
</dbReference>
<dbReference type="InterPro" id="IPR004412">
    <property type="entry name" value="GatA"/>
</dbReference>
<dbReference type="NCBIfam" id="TIGR00132">
    <property type="entry name" value="gatA"/>
    <property type="match status" value="1"/>
</dbReference>
<dbReference type="PANTHER" id="PTHR11895:SF151">
    <property type="entry name" value="GLUTAMYL-TRNA(GLN) AMIDOTRANSFERASE SUBUNIT A"/>
    <property type="match status" value="1"/>
</dbReference>
<dbReference type="PANTHER" id="PTHR11895">
    <property type="entry name" value="TRANSAMIDASE"/>
    <property type="match status" value="1"/>
</dbReference>
<dbReference type="Pfam" id="PF01425">
    <property type="entry name" value="Amidase"/>
    <property type="match status" value="1"/>
</dbReference>
<dbReference type="SUPFAM" id="SSF75304">
    <property type="entry name" value="Amidase signature (AS) enzymes"/>
    <property type="match status" value="1"/>
</dbReference>
<dbReference type="PROSITE" id="PS00571">
    <property type="entry name" value="AMIDASES"/>
    <property type="match status" value="1"/>
</dbReference>
<accession>B9LZ18</accession>
<feature type="chain" id="PRO_1000122479" description="Glutamyl-tRNA(Gln) amidotransferase subunit A">
    <location>
        <begin position="1"/>
        <end position="485"/>
    </location>
</feature>
<feature type="active site" description="Charge relay system" evidence="1">
    <location>
        <position position="78"/>
    </location>
</feature>
<feature type="active site" description="Charge relay system" evidence="1">
    <location>
        <position position="153"/>
    </location>
</feature>
<feature type="active site" description="Acyl-ester intermediate" evidence="1">
    <location>
        <position position="177"/>
    </location>
</feature>
<sequence>MELFELTIHELHDKLKKKEVSSVEATESMLARIEAVEPKVNAFITVTADQALKDAAEADKRIADGDMDKLTGIPVALKDIFLTKGVRTTCASRILENFIPPYDATSVARLKARGAVLVGKLNQDEFAMGSSTESSYFGKTSNPWNLECIPGGSSGGSAAAIAAQQATATLGTDTGGSIRQPASHCGCVGLKPTYGRVSRYGVIAYASSLDQVGPVTRDVTDCAIMLEAVAGYDAKDSTSVDLPVPEYTKALTGQVKGLKIGLPREYFIEGLDPDVQKAMDEAIATYRQMGAEFQEVSLPHTDYAVATYYLVATAEASSNLARYDGARFGHRSHEAQSLLDMYRKSRAEGFGEEVKRRIMLGTYALSSGYYDAYYLKAQKVRTLIMHDFIKAFEQVDVLLTPVAPTPAFRIGEKTSDPLQMYLSDIFTIPVNLAGTCGISVPAGLSRAGLPIGLQLIGKPFGEENILRAAHAFEQNTDWHKRRAAL</sequence>
<proteinExistence type="inferred from homology"/>
<organism>
    <name type="scientific">Geotalea daltonii (strain DSM 22248 / JCM 15807 / FRC-32)</name>
    <name type="common">Geobacter daltonii</name>
    <dbReference type="NCBI Taxonomy" id="316067"/>
    <lineage>
        <taxon>Bacteria</taxon>
        <taxon>Pseudomonadati</taxon>
        <taxon>Thermodesulfobacteriota</taxon>
        <taxon>Desulfuromonadia</taxon>
        <taxon>Geobacterales</taxon>
        <taxon>Geobacteraceae</taxon>
        <taxon>Geotalea</taxon>
    </lineage>
</organism>
<keyword id="KW-0067">ATP-binding</keyword>
<keyword id="KW-0436">Ligase</keyword>
<keyword id="KW-0547">Nucleotide-binding</keyword>
<keyword id="KW-0648">Protein biosynthesis</keyword>
<keyword id="KW-1185">Reference proteome</keyword>
<reference key="1">
    <citation type="submission" date="2009-01" db="EMBL/GenBank/DDBJ databases">
        <title>Complete sequence of Geobacter sp. FRC-32.</title>
        <authorList>
            <consortium name="US DOE Joint Genome Institute"/>
            <person name="Lucas S."/>
            <person name="Copeland A."/>
            <person name="Lapidus A."/>
            <person name="Glavina del Rio T."/>
            <person name="Dalin E."/>
            <person name="Tice H."/>
            <person name="Bruce D."/>
            <person name="Goodwin L."/>
            <person name="Pitluck S."/>
            <person name="Saunders E."/>
            <person name="Brettin T."/>
            <person name="Detter J.C."/>
            <person name="Han C."/>
            <person name="Larimer F."/>
            <person name="Land M."/>
            <person name="Hauser L."/>
            <person name="Kyrpides N."/>
            <person name="Ovchinnikova G."/>
            <person name="Kostka J."/>
            <person name="Richardson P."/>
        </authorList>
    </citation>
    <scope>NUCLEOTIDE SEQUENCE [LARGE SCALE GENOMIC DNA]</scope>
    <source>
        <strain>DSM 22248 / JCM 15807 / FRC-32</strain>
    </source>
</reference>
<protein>
    <recommendedName>
        <fullName evidence="1">Glutamyl-tRNA(Gln) amidotransferase subunit A</fullName>
        <shortName evidence="1">Glu-ADT subunit A</shortName>
        <ecNumber evidence="1">6.3.5.7</ecNumber>
    </recommendedName>
</protein>